<protein>
    <recommendedName>
        <fullName>Peroxidase 6</fullName>
        <ecNumber>1.11.1.7</ecNumber>
    </recommendedName>
</protein>
<proteinExistence type="evidence at protein level"/>
<name>PER6_CYCRE</name>
<sequence length="13" mass="1277">AQVESVCPGVVSC</sequence>
<dbReference type="EC" id="1.11.1.7"/>
<dbReference type="GO" id="GO:0005576">
    <property type="term" value="C:extracellular region"/>
    <property type="evidence" value="ECO:0007669"/>
    <property type="project" value="UniProtKB-SubCell"/>
</dbReference>
<dbReference type="GO" id="GO:0140825">
    <property type="term" value="F:lactoperoxidase activity"/>
    <property type="evidence" value="ECO:0007669"/>
    <property type="project" value="UniProtKB-EC"/>
</dbReference>
<dbReference type="GO" id="GO:0046872">
    <property type="term" value="F:metal ion binding"/>
    <property type="evidence" value="ECO:0007669"/>
    <property type="project" value="UniProtKB-KW"/>
</dbReference>
<dbReference type="GO" id="GO:0042744">
    <property type="term" value="P:hydrogen peroxide catabolic process"/>
    <property type="evidence" value="ECO:0007669"/>
    <property type="project" value="UniProtKB-KW"/>
</dbReference>
<keyword id="KW-0106">Calcium</keyword>
<keyword id="KW-0134">Cell wall</keyword>
<keyword id="KW-0903">Direct protein sequencing</keyword>
<keyword id="KW-0349">Heme</keyword>
<keyword id="KW-0376">Hydrogen peroxide</keyword>
<keyword id="KW-0408">Iron</keyword>
<keyword id="KW-0479">Metal-binding</keyword>
<keyword id="KW-0560">Oxidoreductase</keyword>
<keyword id="KW-0575">Peroxidase</keyword>
<keyword id="KW-0964">Secreted</keyword>
<comment type="function">
    <text evidence="6">Removal of H(2)O(2), oxidation of toxic reductants, biosynthesis and degradation of lignin, suberization, auxin catabolism, response to environmental stresses such as wounding, pathogen attack and oxidative stress. These functions might be dependent on each isozyme/isoform in each plant tissue.</text>
</comment>
<comment type="catalytic activity">
    <reaction>
        <text>2 a phenolic donor + H2O2 = 2 a phenolic radical donor + 2 H2O</text>
        <dbReference type="Rhea" id="RHEA:56136"/>
        <dbReference type="ChEBI" id="CHEBI:15377"/>
        <dbReference type="ChEBI" id="CHEBI:16240"/>
        <dbReference type="ChEBI" id="CHEBI:139520"/>
        <dbReference type="ChEBI" id="CHEBI:139521"/>
        <dbReference type="EC" id="1.11.1.7"/>
    </reaction>
</comment>
<comment type="cofactor">
    <cofactor evidence="2 3">
        <name>heme b</name>
        <dbReference type="ChEBI" id="CHEBI:60344"/>
    </cofactor>
    <text evidence="2 3">Binds 1 heme b (iron(II)-protoporphyrin IX) group per subunit.</text>
</comment>
<comment type="cofactor">
    <cofactor evidence="2 3">
        <name>Ca(2+)</name>
        <dbReference type="ChEBI" id="CHEBI:29108"/>
    </cofactor>
    <text evidence="2 3">Binds 2 calcium ions per subunit.</text>
</comment>
<comment type="subcellular location">
    <subcellularLocation>
        <location evidence="1 3">Secreted</location>
    </subcellularLocation>
    <subcellularLocation>
        <location evidence="4">Secreted</location>
        <location evidence="4">Cell wall</location>
    </subcellularLocation>
</comment>
<comment type="similarity">
    <text evidence="3">Belongs to the peroxidase family. Classical plant (class III) peroxidase subfamily.</text>
</comment>
<organism>
    <name type="scientific">Cycas revoluta</name>
    <name type="common">Sago palm</name>
    <dbReference type="NCBI Taxonomy" id="3396"/>
    <lineage>
        <taxon>Eukaryota</taxon>
        <taxon>Viridiplantae</taxon>
        <taxon>Streptophyta</taxon>
        <taxon>Embryophyta</taxon>
        <taxon>Tracheophyta</taxon>
        <taxon>Spermatophyta</taxon>
        <taxon>Cycadidae</taxon>
        <taxon>Cycadales</taxon>
        <taxon>Cycadaceae</taxon>
        <taxon>Cycas</taxon>
    </lineage>
</organism>
<feature type="chain" id="PRO_0000320213" description="Peroxidase 6">
    <location>
        <begin position="1" status="less than"/>
        <end position="13" status="greater than"/>
    </location>
</feature>
<feature type="non-terminal residue" evidence="5">
    <location>
        <position position="1"/>
    </location>
</feature>
<feature type="non-terminal residue" evidence="5">
    <location>
        <position position="13"/>
    </location>
</feature>
<accession>P85432</accession>
<evidence type="ECO:0000250" key="1">
    <source>
        <dbReference type="UniProtKB" id="P84516"/>
    </source>
</evidence>
<evidence type="ECO:0000250" key="2">
    <source>
        <dbReference type="UniProtKB" id="Q39034"/>
    </source>
</evidence>
<evidence type="ECO:0000255" key="3">
    <source>
        <dbReference type="PROSITE-ProRule" id="PRU00297"/>
    </source>
</evidence>
<evidence type="ECO:0000269" key="4">
    <source>
    </source>
</evidence>
<evidence type="ECO:0000303" key="5">
    <source>
    </source>
</evidence>
<evidence type="ECO:0000305" key="6"/>
<reference evidence="6" key="1">
    <citation type="journal article" date="2009" name="J. Plant Physiol.">
        <title>Analysis of the soluble cell wall proteome of gymnosperms.</title>
        <authorList>
            <person name="Uzal E.N."/>
            <person name="Gomez-Ros L.V."/>
            <person name="Hernandez J.A."/>
            <person name="Pedreno M.A."/>
            <person name="Cuello J."/>
            <person name="Ros Barcelo A."/>
        </authorList>
    </citation>
    <scope>PROTEIN SEQUENCE</scope>
    <scope>SUBCELLULAR LOCATION</scope>
    <source>
        <tissue evidence="4">Callus</tissue>
    </source>
</reference>